<accession>P27427</accession>
<gene>
    <name type="primary">P4</name>
</gene>
<keyword id="KW-0002">3D-structure</keyword>
<keyword id="KW-1015">Disulfide bond</keyword>
<keyword id="KW-0325">Glycoprotein</keyword>
<keyword id="KW-0472">Membrane</keyword>
<keyword id="KW-0732">Signal</keyword>
<keyword id="KW-0812">Transmembrane</keyword>
<keyword id="KW-1133">Transmembrane helix</keyword>
<keyword id="KW-0946">Virion</keyword>
<dbReference type="EMBL" id="M34002">
    <property type="protein sequence ID" value="AAA47907.1"/>
    <property type="molecule type" value="Genomic_RNA"/>
</dbReference>
<dbReference type="PIR" id="A34679">
    <property type="entry name" value="VGIVDH"/>
</dbReference>
<dbReference type="PDB" id="5XEB">
    <property type="method" value="X-ray"/>
    <property type="resolution" value="2.50 A"/>
    <property type="chains" value="A/B/C=21-494"/>
</dbReference>
<dbReference type="PDB" id="7XYM">
    <property type="method" value="EM"/>
    <property type="resolution" value="3.30 A"/>
    <property type="chains" value="A/B/C=2-521"/>
</dbReference>
<dbReference type="PDBsum" id="5XEB"/>
<dbReference type="PDBsum" id="7XYM"/>
<dbReference type="EMDB" id="EMD-33522"/>
<dbReference type="SMR" id="P27427"/>
<dbReference type="IntAct" id="P27427">
    <property type="interactions" value="1"/>
</dbReference>
<dbReference type="GlyCosmos" id="P27427">
    <property type="glycosylation" value="4 sites, No reported glycans"/>
</dbReference>
<dbReference type="GO" id="GO:0016020">
    <property type="term" value="C:membrane"/>
    <property type="evidence" value="ECO:0007669"/>
    <property type="project" value="UniProtKB-KW"/>
</dbReference>
<dbReference type="GO" id="GO:0019031">
    <property type="term" value="C:viral envelope"/>
    <property type="evidence" value="ECO:0007669"/>
    <property type="project" value="InterPro"/>
</dbReference>
<dbReference type="GO" id="GO:0055036">
    <property type="term" value="C:virion membrane"/>
    <property type="evidence" value="ECO:0007669"/>
    <property type="project" value="UniProtKB-SubCell"/>
</dbReference>
<dbReference type="GO" id="GO:0044003">
    <property type="term" value="P:symbiont-mediated perturbation of host process"/>
    <property type="evidence" value="ECO:0007669"/>
    <property type="project" value="InterPro"/>
</dbReference>
<dbReference type="Gene3D" id="6.10.250.2130">
    <property type="match status" value="1"/>
</dbReference>
<dbReference type="Gene3D" id="6.10.250.3010">
    <property type="match status" value="1"/>
</dbReference>
<dbReference type="Gene3D" id="6.20.460.10">
    <property type="match status" value="1"/>
</dbReference>
<dbReference type="InterPro" id="IPR004955">
    <property type="entry name" value="Baculovirus_Gp64"/>
</dbReference>
<dbReference type="Pfam" id="PF03273">
    <property type="entry name" value="Baculo_gp64"/>
    <property type="match status" value="1"/>
</dbReference>
<evidence type="ECO:0000255" key="1"/>
<evidence type="ECO:0000305" key="2"/>
<evidence type="ECO:0007829" key="3">
    <source>
        <dbReference type="PDB" id="5XEB"/>
    </source>
</evidence>
<evidence type="ECO:0007829" key="4">
    <source>
        <dbReference type="PDB" id="7XYM"/>
    </source>
</evidence>
<feature type="signal peptide" evidence="1">
    <location>
        <begin position="1"/>
        <end position="20"/>
    </location>
</feature>
<feature type="chain" id="PRO_0000039174" description="Envelope glycoprotein">
    <location>
        <begin position="21"/>
        <end position="521"/>
    </location>
</feature>
<feature type="transmembrane region" description="Helical" evidence="1">
    <location>
        <begin position="501"/>
        <end position="517"/>
    </location>
</feature>
<feature type="glycosylation site" description="N-linked (GlcNAc...) asparagine; by host" evidence="1">
    <location>
        <position position="44"/>
    </location>
</feature>
<feature type="glycosylation site" description="N-linked (GlcNAc...) asparagine; by host" evidence="1">
    <location>
        <position position="158"/>
    </location>
</feature>
<feature type="glycosylation site" description="N-linked (GlcNAc...) asparagine; by host" evidence="1">
    <location>
        <position position="189"/>
    </location>
</feature>
<feature type="glycosylation site" description="N-linked (GlcNAc...) asparagine; by host" evidence="1">
    <location>
        <position position="396"/>
    </location>
</feature>
<feature type="strand" evidence="3">
    <location>
        <begin position="45"/>
        <end position="59"/>
    </location>
</feature>
<feature type="strand" evidence="3">
    <location>
        <begin position="64"/>
        <end position="78"/>
    </location>
</feature>
<feature type="strand" evidence="4">
    <location>
        <begin position="81"/>
        <end position="83"/>
    </location>
</feature>
<feature type="strand" evidence="3">
    <location>
        <begin position="87"/>
        <end position="94"/>
    </location>
</feature>
<feature type="helix" evidence="3">
    <location>
        <begin position="99"/>
        <end position="108"/>
    </location>
</feature>
<feature type="strand" evidence="3">
    <location>
        <begin position="111"/>
        <end position="113"/>
    </location>
</feature>
<feature type="strand" evidence="3">
    <location>
        <begin position="117"/>
        <end position="121"/>
    </location>
</feature>
<feature type="helix" evidence="3">
    <location>
        <begin position="124"/>
        <end position="129"/>
    </location>
</feature>
<feature type="strand" evidence="3">
    <location>
        <begin position="136"/>
        <end position="139"/>
    </location>
</feature>
<feature type="strand" evidence="3">
    <location>
        <begin position="154"/>
        <end position="168"/>
    </location>
</feature>
<feature type="strand" evidence="4">
    <location>
        <begin position="169"/>
        <end position="171"/>
    </location>
</feature>
<feature type="strand" evidence="3">
    <location>
        <begin position="173"/>
        <end position="179"/>
    </location>
</feature>
<feature type="strand" evidence="3">
    <location>
        <begin position="181"/>
        <end position="186"/>
    </location>
</feature>
<feature type="strand" evidence="3">
    <location>
        <begin position="192"/>
        <end position="195"/>
    </location>
</feature>
<feature type="strand" evidence="3">
    <location>
        <begin position="197"/>
        <end position="199"/>
    </location>
</feature>
<feature type="strand" evidence="3">
    <location>
        <begin position="201"/>
        <end position="205"/>
    </location>
</feature>
<feature type="strand" evidence="3">
    <location>
        <begin position="208"/>
        <end position="212"/>
    </location>
</feature>
<feature type="strand" evidence="3">
    <location>
        <begin position="217"/>
        <end position="231"/>
    </location>
</feature>
<feature type="turn" evidence="4">
    <location>
        <begin position="246"/>
        <end position="248"/>
    </location>
</feature>
<feature type="strand" evidence="3">
    <location>
        <begin position="260"/>
        <end position="264"/>
    </location>
</feature>
<feature type="strand" evidence="3">
    <location>
        <begin position="269"/>
        <end position="271"/>
    </location>
</feature>
<feature type="strand" evidence="3">
    <location>
        <begin position="278"/>
        <end position="280"/>
    </location>
</feature>
<feature type="strand" evidence="3">
    <location>
        <begin position="283"/>
        <end position="287"/>
    </location>
</feature>
<feature type="helix" evidence="3">
    <location>
        <begin position="303"/>
        <end position="306"/>
    </location>
</feature>
<feature type="helix" evidence="3">
    <location>
        <begin position="311"/>
        <end position="354"/>
    </location>
</feature>
<feature type="helix" evidence="3">
    <location>
        <begin position="360"/>
        <end position="365"/>
    </location>
</feature>
<feature type="strand" evidence="3">
    <location>
        <begin position="370"/>
        <end position="372"/>
    </location>
</feature>
<feature type="strand" evidence="3">
    <location>
        <begin position="374"/>
        <end position="377"/>
    </location>
</feature>
<feature type="strand" evidence="3">
    <location>
        <begin position="380"/>
        <end position="382"/>
    </location>
</feature>
<feature type="strand" evidence="4">
    <location>
        <begin position="395"/>
        <end position="397"/>
    </location>
</feature>
<feature type="strand" evidence="4">
    <location>
        <begin position="401"/>
        <end position="404"/>
    </location>
</feature>
<feature type="strand" evidence="4">
    <location>
        <begin position="425"/>
        <end position="427"/>
    </location>
</feature>
<feature type="helix" evidence="3">
    <location>
        <begin position="445"/>
        <end position="447"/>
    </location>
</feature>
<feature type="helix" evidence="3">
    <location>
        <begin position="449"/>
        <end position="464"/>
    </location>
</feature>
<feature type="strand" evidence="4">
    <location>
        <begin position="472"/>
        <end position="475"/>
    </location>
</feature>
<feature type="turn" evidence="4">
    <location>
        <begin position="485"/>
        <end position="487"/>
    </location>
</feature>
<feature type="helix" evidence="4">
    <location>
        <begin position="488"/>
        <end position="507"/>
    </location>
</feature>
<reference key="1">
    <citation type="journal article" date="1990" name="Virology">
        <title>Nucleotide sequence of the tick-borne, orthomyxo-like Dhori/Indian/1313/61 virus envelope gene.</title>
        <authorList>
            <person name="Freedman-Faulstich E.Z."/>
            <person name="Fuller F.J."/>
        </authorList>
    </citation>
    <scope>NUCLEOTIDE SEQUENCE [GENOMIC RNA]</scope>
</reference>
<proteinExistence type="evidence at protein level"/>
<sequence length="521" mass="58676">MVDSTIRLVATIFLISLTQQIEVCNKAQQQGPYTLVDYQEKPLNISRIQIKVVKTSVATKGLNFHIGYRAVWRGYCYNGGSLDKNTGCYNDLIPKSPTESELRTWSKSQKCCTGPDAVDAWGSDARICWAEWKMELCHTAKELKKYSNNNHFAYHTCNLSWRCGLKSTHIEVRLQASGGLVSMVAVMPNGTLIPIEGTRPTYWTEDSFAYLYDPAGTEKKTESTFLWCFKEHIRPTTELSGAVYDTHYLGGTYDKNPQFNYYCRDNGYYFELPANRLVCLPTSCYKREGAIVNTMHPNTWKVSEKLHSASQFDVNNVVHSLVYETEGLRLALSQLDHRFATLSRLFNRLTQSLAKIDDRLLGTLLGQDVSSKFISPTKFMLSPCLSTPEGDSNCHNHSIYRDGRWVHNSDPTQCFSLSKSQPVDLYSFKELWLPQLLDVNVKGVVADEEGWSFVAQSKQALIDTMTYTKNGGKGTSLEDVLGYPSGWINGKLQGLLLNGAISWVVVIGVVLVGVCLMRRVF</sequence>
<organism>
    <name type="scientific">Dhori virus (strain Indian/1313/61)</name>
    <name type="common">Dho</name>
    <dbReference type="NCBI Taxonomy" id="11319"/>
    <lineage>
        <taxon>Viruses</taxon>
        <taxon>Riboviria</taxon>
        <taxon>Orthornavirae</taxon>
        <taxon>Negarnaviricota</taxon>
        <taxon>Polyploviricotina</taxon>
        <taxon>Insthoviricetes</taxon>
        <taxon>Articulavirales</taxon>
        <taxon>Orthomyxoviridae</taxon>
        <taxon>Thogotovirus</taxon>
        <taxon>Thogotovirus dhoriense</taxon>
    </lineage>
</organism>
<comment type="function">
    <text evidence="2">Attaches the virus to host cellular receptor and later induces fusion of virion with host membrane.</text>
</comment>
<comment type="subunit">
    <text>Homooligomer; disulfide-linked (possibly homodimer).</text>
</comment>
<comment type="subcellular location">
    <subcellularLocation>
        <location evidence="2">Virion membrane</location>
    </subcellularLocation>
</comment>
<name>ENV_DHVI1</name>
<organismHost>
    <name type="scientific">Homo sapiens</name>
    <name type="common">Human</name>
    <dbReference type="NCBI Taxonomy" id="9606"/>
</organismHost>
<organismHost>
    <name type="scientific">Ixodida</name>
    <name type="common">ticks</name>
    <dbReference type="NCBI Taxonomy" id="6935"/>
</organismHost>
<protein>
    <recommendedName>
        <fullName>Envelope glycoprotein</fullName>
    </recommendedName>
</protein>